<sequence>MRYITAGESHGPQLTVILEGVPAGLTLAAEHINKELLRRQKGHGRGRRMQIETDTVEIVSGVRHGMTLGSPITLIVKNDDFKHWTKVMGADPISEKESKEMKRTITKPRPGHADLNGAIKYGHRDIRNVLERSSARETTVRVAAGAVAKQILKELGVEIAGHVLEIGGVKAKHILNLSIEEIQIITENSPVRCLDKTVEQEMMDAIDNAKNSGDSIGGIVEVIAEGMPIGVGSYVHYDRKLDAKLAGAIMSINAFKGAEIGVGFEAARQPGSKVHDEILWDEEQGYTRKTNNAGGLEGGMTTGMPIVVRGVMKPIPTLYKPLASVDIDTKEAFQASIERSDSCAVPAAGVVAESVVAWELAHALVEQFGKDRMELIQQNITQHNKYAKEF</sequence>
<feature type="chain" id="PRO_0000322389" description="Chorismate synthase 2">
    <location>
        <begin position="1"/>
        <end position="390"/>
    </location>
</feature>
<feature type="binding site" evidence="1">
    <location>
        <position position="39"/>
    </location>
    <ligand>
        <name>NADP(+)</name>
        <dbReference type="ChEBI" id="CHEBI:58349"/>
    </ligand>
</feature>
<feature type="binding site" evidence="1">
    <location>
        <position position="45"/>
    </location>
    <ligand>
        <name>NADP(+)</name>
        <dbReference type="ChEBI" id="CHEBI:58349"/>
    </ligand>
</feature>
<feature type="binding site" evidence="1">
    <location>
        <begin position="132"/>
        <end position="134"/>
    </location>
    <ligand>
        <name>FMN</name>
        <dbReference type="ChEBI" id="CHEBI:58210"/>
    </ligand>
</feature>
<feature type="binding site" evidence="1">
    <location>
        <begin position="253"/>
        <end position="254"/>
    </location>
    <ligand>
        <name>FMN</name>
        <dbReference type="ChEBI" id="CHEBI:58210"/>
    </ligand>
</feature>
<feature type="binding site" evidence="1">
    <location>
        <position position="298"/>
    </location>
    <ligand>
        <name>FMN</name>
        <dbReference type="ChEBI" id="CHEBI:58210"/>
    </ligand>
</feature>
<feature type="binding site" evidence="1">
    <location>
        <begin position="313"/>
        <end position="317"/>
    </location>
    <ligand>
        <name>FMN</name>
        <dbReference type="ChEBI" id="CHEBI:58210"/>
    </ligand>
</feature>
<feature type="binding site" evidence="1">
    <location>
        <position position="339"/>
    </location>
    <ligand>
        <name>FMN</name>
        <dbReference type="ChEBI" id="CHEBI:58210"/>
    </ligand>
</feature>
<protein>
    <recommendedName>
        <fullName evidence="1">Chorismate synthase 2</fullName>
        <shortName evidence="1">CS 2</shortName>
        <ecNumber evidence="1">4.2.3.5</ecNumber>
    </recommendedName>
    <alternativeName>
        <fullName evidence="1">5-enolpyruvylshikimate-3-phosphate phospholyase 2</fullName>
    </alternativeName>
</protein>
<comment type="function">
    <text evidence="1">Catalyzes the anti-1,4-elimination of the C-3 phosphate and the C-6 proR hydrogen from 5-enolpyruvylshikimate-3-phosphate (EPSP) to yield chorismate, which is the branch point compound that serves as the starting substrate for the three terminal pathways of aromatic amino acid biosynthesis. This reaction introduces a second double bond into the aromatic ring system.</text>
</comment>
<comment type="catalytic activity">
    <reaction evidence="1">
        <text>5-O-(1-carboxyvinyl)-3-phosphoshikimate = chorismate + phosphate</text>
        <dbReference type="Rhea" id="RHEA:21020"/>
        <dbReference type="ChEBI" id="CHEBI:29748"/>
        <dbReference type="ChEBI" id="CHEBI:43474"/>
        <dbReference type="ChEBI" id="CHEBI:57701"/>
        <dbReference type="EC" id="4.2.3.5"/>
    </reaction>
</comment>
<comment type="cofactor">
    <cofactor evidence="1">
        <name>FMNH2</name>
        <dbReference type="ChEBI" id="CHEBI:57618"/>
    </cofactor>
    <text evidence="1">Reduced FMN (FMNH(2)).</text>
</comment>
<comment type="pathway">
    <text evidence="1">Metabolic intermediate biosynthesis; chorismate biosynthesis; chorismate from D-erythrose 4-phosphate and phosphoenolpyruvate: step 7/7.</text>
</comment>
<comment type="subunit">
    <text evidence="1">Homotetramer.</text>
</comment>
<comment type="similarity">
    <text evidence="1">Belongs to the chorismate synthase family.</text>
</comment>
<proteinExistence type="inferred from homology"/>
<reference key="1">
    <citation type="journal article" date="2007" name="J. Bacteriol.">
        <title>The complete genome sequence of Bacillus thuringiensis Al Hakam.</title>
        <authorList>
            <person name="Challacombe J.F."/>
            <person name="Altherr M.R."/>
            <person name="Xie G."/>
            <person name="Bhotika S.S."/>
            <person name="Brown N."/>
            <person name="Bruce D."/>
            <person name="Campbell C.S."/>
            <person name="Campbell M.L."/>
            <person name="Chen J."/>
            <person name="Chertkov O."/>
            <person name="Cleland C."/>
            <person name="Dimitrijevic M."/>
            <person name="Doggett N.A."/>
            <person name="Fawcett J.J."/>
            <person name="Glavina T."/>
            <person name="Goodwin L.A."/>
            <person name="Green L.D."/>
            <person name="Han C.S."/>
            <person name="Hill K.K."/>
            <person name="Hitchcock P."/>
            <person name="Jackson P.J."/>
            <person name="Keim P."/>
            <person name="Kewalramani A.R."/>
            <person name="Longmire J."/>
            <person name="Lucas S."/>
            <person name="Malfatti S."/>
            <person name="Martinez D."/>
            <person name="McMurry K."/>
            <person name="Meincke L.J."/>
            <person name="Misra M."/>
            <person name="Moseman B.L."/>
            <person name="Mundt M."/>
            <person name="Munk A.C."/>
            <person name="Okinaka R.T."/>
            <person name="Parson-Quintana B."/>
            <person name="Reilly L.P."/>
            <person name="Richardson P."/>
            <person name="Robinson D.L."/>
            <person name="Saunders E."/>
            <person name="Tapia R."/>
            <person name="Tesmer J.G."/>
            <person name="Thayer N."/>
            <person name="Thompson L.S."/>
            <person name="Tice H."/>
            <person name="Ticknor L.O."/>
            <person name="Wills P.L."/>
            <person name="Gilna P."/>
            <person name="Brettin T.S."/>
        </authorList>
    </citation>
    <scope>NUCLEOTIDE SEQUENCE [LARGE SCALE GENOMIC DNA]</scope>
    <source>
        <strain>Al Hakam</strain>
    </source>
</reference>
<evidence type="ECO:0000255" key="1">
    <source>
        <dbReference type="HAMAP-Rule" id="MF_00300"/>
    </source>
</evidence>
<keyword id="KW-0028">Amino-acid biosynthesis</keyword>
<keyword id="KW-0057">Aromatic amino acid biosynthesis</keyword>
<keyword id="KW-0274">FAD</keyword>
<keyword id="KW-0285">Flavoprotein</keyword>
<keyword id="KW-0288">FMN</keyword>
<keyword id="KW-0456">Lyase</keyword>
<keyword id="KW-0521">NADP</keyword>
<gene>
    <name evidence="1" type="primary">aroC2</name>
    <name type="ordered locus">BALH_2644</name>
</gene>
<organism>
    <name type="scientific">Bacillus thuringiensis (strain Al Hakam)</name>
    <dbReference type="NCBI Taxonomy" id="412694"/>
    <lineage>
        <taxon>Bacteria</taxon>
        <taxon>Bacillati</taxon>
        <taxon>Bacillota</taxon>
        <taxon>Bacilli</taxon>
        <taxon>Bacillales</taxon>
        <taxon>Bacillaceae</taxon>
        <taxon>Bacillus</taxon>
        <taxon>Bacillus cereus group</taxon>
    </lineage>
</organism>
<name>AROC2_BACAH</name>
<dbReference type="EC" id="4.2.3.5" evidence="1"/>
<dbReference type="EMBL" id="CP000485">
    <property type="protein sequence ID" value="ABK85927.1"/>
    <property type="molecule type" value="Genomic_DNA"/>
</dbReference>
<dbReference type="RefSeq" id="WP_001269397.1">
    <property type="nucleotide sequence ID" value="NC_008600.1"/>
</dbReference>
<dbReference type="SMR" id="A0RFD4"/>
<dbReference type="KEGG" id="btl:BALH_2644"/>
<dbReference type="HOGENOM" id="CLU_034547_2_0_9"/>
<dbReference type="UniPathway" id="UPA00053">
    <property type="reaction ID" value="UER00090"/>
</dbReference>
<dbReference type="GO" id="GO:0005829">
    <property type="term" value="C:cytosol"/>
    <property type="evidence" value="ECO:0007669"/>
    <property type="project" value="TreeGrafter"/>
</dbReference>
<dbReference type="GO" id="GO:0004107">
    <property type="term" value="F:chorismate synthase activity"/>
    <property type="evidence" value="ECO:0007669"/>
    <property type="project" value="UniProtKB-UniRule"/>
</dbReference>
<dbReference type="GO" id="GO:0010181">
    <property type="term" value="F:FMN binding"/>
    <property type="evidence" value="ECO:0007669"/>
    <property type="project" value="TreeGrafter"/>
</dbReference>
<dbReference type="GO" id="GO:0008652">
    <property type="term" value="P:amino acid biosynthetic process"/>
    <property type="evidence" value="ECO:0007669"/>
    <property type="project" value="UniProtKB-KW"/>
</dbReference>
<dbReference type="GO" id="GO:0009073">
    <property type="term" value="P:aromatic amino acid family biosynthetic process"/>
    <property type="evidence" value="ECO:0007669"/>
    <property type="project" value="UniProtKB-KW"/>
</dbReference>
<dbReference type="GO" id="GO:0009423">
    <property type="term" value="P:chorismate biosynthetic process"/>
    <property type="evidence" value="ECO:0007669"/>
    <property type="project" value="UniProtKB-UniRule"/>
</dbReference>
<dbReference type="CDD" id="cd07304">
    <property type="entry name" value="Chorismate_synthase"/>
    <property type="match status" value="1"/>
</dbReference>
<dbReference type="FunFam" id="3.60.150.10:FF:000002">
    <property type="entry name" value="Chorismate synthase"/>
    <property type="match status" value="1"/>
</dbReference>
<dbReference type="Gene3D" id="3.60.150.10">
    <property type="entry name" value="Chorismate synthase AroC"/>
    <property type="match status" value="1"/>
</dbReference>
<dbReference type="HAMAP" id="MF_00300">
    <property type="entry name" value="Chorismate_synth"/>
    <property type="match status" value="1"/>
</dbReference>
<dbReference type="InterPro" id="IPR000453">
    <property type="entry name" value="Chorismate_synth"/>
</dbReference>
<dbReference type="InterPro" id="IPR035904">
    <property type="entry name" value="Chorismate_synth_AroC_sf"/>
</dbReference>
<dbReference type="InterPro" id="IPR020541">
    <property type="entry name" value="Chorismate_synthase_CS"/>
</dbReference>
<dbReference type="NCBIfam" id="TIGR00033">
    <property type="entry name" value="aroC"/>
    <property type="match status" value="1"/>
</dbReference>
<dbReference type="NCBIfam" id="NF003793">
    <property type="entry name" value="PRK05382.1"/>
    <property type="match status" value="1"/>
</dbReference>
<dbReference type="NCBIfam" id="NF009113">
    <property type="entry name" value="PRK12463.1"/>
    <property type="match status" value="1"/>
</dbReference>
<dbReference type="PANTHER" id="PTHR21085">
    <property type="entry name" value="CHORISMATE SYNTHASE"/>
    <property type="match status" value="1"/>
</dbReference>
<dbReference type="PANTHER" id="PTHR21085:SF0">
    <property type="entry name" value="CHORISMATE SYNTHASE"/>
    <property type="match status" value="1"/>
</dbReference>
<dbReference type="Pfam" id="PF01264">
    <property type="entry name" value="Chorismate_synt"/>
    <property type="match status" value="1"/>
</dbReference>
<dbReference type="PIRSF" id="PIRSF001456">
    <property type="entry name" value="Chorismate_synth"/>
    <property type="match status" value="1"/>
</dbReference>
<dbReference type="SUPFAM" id="SSF103263">
    <property type="entry name" value="Chorismate synthase, AroC"/>
    <property type="match status" value="1"/>
</dbReference>
<dbReference type="PROSITE" id="PS00787">
    <property type="entry name" value="CHORISMATE_SYNTHASE_1"/>
    <property type="match status" value="1"/>
</dbReference>
<dbReference type="PROSITE" id="PS00788">
    <property type="entry name" value="CHORISMATE_SYNTHASE_2"/>
    <property type="match status" value="1"/>
</dbReference>
<dbReference type="PROSITE" id="PS00789">
    <property type="entry name" value="CHORISMATE_SYNTHASE_3"/>
    <property type="match status" value="1"/>
</dbReference>
<accession>A0RFD4</accession>